<keyword id="KW-0150">Chloroplast</keyword>
<keyword id="KW-0934">Plastid</keyword>
<keyword id="KW-0687">Ribonucleoprotein</keyword>
<keyword id="KW-0689">Ribosomal protein</keyword>
<keyword id="KW-0694">RNA-binding</keyword>
<keyword id="KW-0699">rRNA-binding</keyword>
<name>RR4_LACSA</name>
<proteinExistence type="inferred from homology"/>
<geneLocation type="chloroplast"/>
<dbReference type="EMBL" id="AP007232">
    <property type="protein sequence ID" value="BAE47596.1"/>
    <property type="molecule type" value="Genomic_DNA"/>
</dbReference>
<dbReference type="EMBL" id="DQ383816">
    <property type="protein sequence ID" value="ABD47235.1"/>
    <property type="molecule type" value="Genomic_DNA"/>
</dbReference>
<dbReference type="RefSeq" id="YP_398331.1">
    <property type="nucleotide sequence ID" value="NC_007578.1"/>
</dbReference>
<dbReference type="SMR" id="Q332X6"/>
<dbReference type="EnsemblPlants" id="rna-gnl|WGS:NBSK|LSAT_3X99201_mrna">
    <property type="protein sequence ID" value="cds-PLY75278.1"/>
    <property type="gene ID" value="gene-LSAT_3X99201"/>
</dbReference>
<dbReference type="GeneID" id="3772785"/>
<dbReference type="Gramene" id="rna-gnl|WGS:NBSK|LSAT_3X99201_mrna">
    <property type="protein sequence ID" value="cds-PLY75278.1"/>
    <property type="gene ID" value="gene-LSAT_3X99201"/>
</dbReference>
<dbReference type="KEGG" id="lsv:3772785"/>
<dbReference type="OrthoDB" id="2443at2759"/>
<dbReference type="GO" id="GO:0009507">
    <property type="term" value="C:chloroplast"/>
    <property type="evidence" value="ECO:0007669"/>
    <property type="project" value="UniProtKB-SubCell"/>
</dbReference>
<dbReference type="GO" id="GO:0015935">
    <property type="term" value="C:small ribosomal subunit"/>
    <property type="evidence" value="ECO:0007669"/>
    <property type="project" value="InterPro"/>
</dbReference>
<dbReference type="GO" id="GO:0019843">
    <property type="term" value="F:rRNA binding"/>
    <property type="evidence" value="ECO:0007669"/>
    <property type="project" value="UniProtKB-UniRule"/>
</dbReference>
<dbReference type="GO" id="GO:0003735">
    <property type="term" value="F:structural constituent of ribosome"/>
    <property type="evidence" value="ECO:0007669"/>
    <property type="project" value="InterPro"/>
</dbReference>
<dbReference type="GO" id="GO:0006412">
    <property type="term" value="P:translation"/>
    <property type="evidence" value="ECO:0007669"/>
    <property type="project" value="UniProtKB-UniRule"/>
</dbReference>
<dbReference type="CDD" id="cd00165">
    <property type="entry name" value="S4"/>
    <property type="match status" value="1"/>
</dbReference>
<dbReference type="FunFam" id="1.10.1050.10:FF:000002">
    <property type="entry name" value="30S ribosomal protein S4, chloroplastic"/>
    <property type="match status" value="1"/>
</dbReference>
<dbReference type="FunFam" id="3.10.290.10:FF:000081">
    <property type="entry name" value="30S ribosomal protein S4, chloroplastic"/>
    <property type="match status" value="1"/>
</dbReference>
<dbReference type="Gene3D" id="1.10.1050.10">
    <property type="entry name" value="Ribosomal Protein S4 Delta 41, Chain A, domain 1"/>
    <property type="match status" value="1"/>
</dbReference>
<dbReference type="Gene3D" id="3.10.290.10">
    <property type="entry name" value="RNA-binding S4 domain"/>
    <property type="match status" value="1"/>
</dbReference>
<dbReference type="HAMAP" id="MF_01306_B">
    <property type="entry name" value="Ribosomal_uS4_B"/>
    <property type="match status" value="1"/>
</dbReference>
<dbReference type="InterPro" id="IPR022801">
    <property type="entry name" value="Ribosomal_uS4"/>
</dbReference>
<dbReference type="InterPro" id="IPR005709">
    <property type="entry name" value="Ribosomal_uS4_bac-type"/>
</dbReference>
<dbReference type="InterPro" id="IPR018079">
    <property type="entry name" value="Ribosomal_uS4_CS"/>
</dbReference>
<dbReference type="InterPro" id="IPR001912">
    <property type="entry name" value="Ribosomal_uS4_N"/>
</dbReference>
<dbReference type="InterPro" id="IPR002942">
    <property type="entry name" value="S4_RNA-bd"/>
</dbReference>
<dbReference type="InterPro" id="IPR036986">
    <property type="entry name" value="S4_RNA-bd_sf"/>
</dbReference>
<dbReference type="NCBIfam" id="NF003717">
    <property type="entry name" value="PRK05327.1"/>
    <property type="match status" value="1"/>
</dbReference>
<dbReference type="NCBIfam" id="TIGR01017">
    <property type="entry name" value="rpsD_bact"/>
    <property type="match status" value="1"/>
</dbReference>
<dbReference type="PANTHER" id="PTHR11831">
    <property type="entry name" value="30S 40S RIBOSOMAL PROTEIN"/>
    <property type="match status" value="1"/>
</dbReference>
<dbReference type="PANTHER" id="PTHR11831:SF4">
    <property type="entry name" value="SMALL RIBOSOMAL SUBUNIT PROTEIN US4M"/>
    <property type="match status" value="1"/>
</dbReference>
<dbReference type="Pfam" id="PF00163">
    <property type="entry name" value="Ribosomal_S4"/>
    <property type="match status" value="1"/>
</dbReference>
<dbReference type="Pfam" id="PF01479">
    <property type="entry name" value="S4"/>
    <property type="match status" value="1"/>
</dbReference>
<dbReference type="SMART" id="SM01390">
    <property type="entry name" value="Ribosomal_S4"/>
    <property type="match status" value="1"/>
</dbReference>
<dbReference type="SMART" id="SM00363">
    <property type="entry name" value="S4"/>
    <property type="match status" value="1"/>
</dbReference>
<dbReference type="SUPFAM" id="SSF55174">
    <property type="entry name" value="Alpha-L RNA-binding motif"/>
    <property type="match status" value="1"/>
</dbReference>
<dbReference type="PROSITE" id="PS00632">
    <property type="entry name" value="RIBOSOMAL_S4"/>
    <property type="match status" value="1"/>
</dbReference>
<dbReference type="PROSITE" id="PS50889">
    <property type="entry name" value="S4"/>
    <property type="match status" value="1"/>
</dbReference>
<sequence length="201" mass="23280">MSRYRGPRFKKIRRLGALPGLTNKRPRAGSDLRNQSRSGKKSQYRIRLEEKQKLRFHYGLTERQLLKYVRIAGKAKGSTGQVLLQLLEMRLDNILFRLGMAPTIPGARQLVNHRHILVNGRIVDIPSYRCKPRDTIAARDEQKSKVLIQNSLDSSPHEELPNHLTLQPFQYKGLVNQIIDSKWVGLKINELLVVEYYSRQT</sequence>
<accession>Q332X6</accession>
<accession>Q1KXM1</accession>
<feature type="chain" id="PRO_0000228949" description="Small ribosomal subunit protein uS4c">
    <location>
        <begin position="1"/>
        <end position="201"/>
    </location>
</feature>
<feature type="domain" description="S4 RNA-binding">
    <location>
        <begin position="89"/>
        <end position="150"/>
    </location>
</feature>
<feature type="region of interest" description="Disordered" evidence="2">
    <location>
        <begin position="15"/>
        <end position="44"/>
    </location>
</feature>
<protein>
    <recommendedName>
        <fullName evidence="3">Small ribosomal subunit protein uS4c</fullName>
    </recommendedName>
    <alternativeName>
        <fullName>30S ribosomal protein S4, chloroplastic</fullName>
    </alternativeName>
</protein>
<gene>
    <name type="primary">rps4</name>
</gene>
<reference key="1">
    <citation type="journal article" date="2006" name="Transgenic Res.">
        <title>Efficient and stable transformation of Lactuca sativa L. cv. Cisco (lettuce) plastids.</title>
        <authorList>
            <person name="Kanamoto H."/>
            <person name="Yamashita A."/>
            <person name="Asao H."/>
            <person name="Okumura S."/>
            <person name="Takase H."/>
            <person name="Hattori M."/>
            <person name="Yokota A."/>
            <person name="Tomizawa K."/>
        </authorList>
    </citation>
    <scope>NUCLEOTIDE SEQUENCE [LARGE SCALE GENOMIC DNA]</scope>
    <source>
        <strain>cv. Cisco</strain>
    </source>
</reference>
<reference key="2">
    <citation type="submission" date="2006-01" db="EMBL/GenBank/DDBJ databases">
        <title>A comparison of the first two published chloroplast genomes in Asteraceae: Lactuca and Helianthus.</title>
        <authorList>
            <person name="Timme R.E."/>
            <person name="Kuehl J.V."/>
            <person name="Boore J.L."/>
            <person name="Jansen R.K."/>
        </authorList>
    </citation>
    <scope>NUCLEOTIDE SEQUENCE [LARGE SCALE GENOMIC DNA]</scope>
    <source>
        <strain>cv. Salinas</strain>
    </source>
</reference>
<evidence type="ECO:0000250" key="1"/>
<evidence type="ECO:0000256" key="2">
    <source>
        <dbReference type="SAM" id="MobiDB-lite"/>
    </source>
</evidence>
<evidence type="ECO:0000305" key="3"/>
<organism>
    <name type="scientific">Lactuca sativa</name>
    <name type="common">Garden lettuce</name>
    <dbReference type="NCBI Taxonomy" id="4236"/>
    <lineage>
        <taxon>Eukaryota</taxon>
        <taxon>Viridiplantae</taxon>
        <taxon>Streptophyta</taxon>
        <taxon>Embryophyta</taxon>
        <taxon>Tracheophyta</taxon>
        <taxon>Spermatophyta</taxon>
        <taxon>Magnoliopsida</taxon>
        <taxon>eudicotyledons</taxon>
        <taxon>Gunneridae</taxon>
        <taxon>Pentapetalae</taxon>
        <taxon>asterids</taxon>
        <taxon>campanulids</taxon>
        <taxon>Asterales</taxon>
        <taxon>Asteraceae</taxon>
        <taxon>Cichorioideae</taxon>
        <taxon>Cichorieae</taxon>
        <taxon>Lactucinae</taxon>
        <taxon>Lactuca</taxon>
    </lineage>
</organism>
<comment type="function">
    <text evidence="1">One of the primary rRNA binding proteins, it binds directly to 16S rRNA where it nucleates assembly of the body of the 30S subunit.</text>
</comment>
<comment type="function">
    <text evidence="1">With S5 and S12 plays an important role in translational accuracy.</text>
</comment>
<comment type="subunit">
    <text evidence="1">Part of the 30S ribosomal subunit. Contacts protein S5. The interaction surface between S4 and S5 is involved in control of translational fidelity (By similarity).</text>
</comment>
<comment type="subcellular location">
    <subcellularLocation>
        <location>Plastid</location>
        <location>Chloroplast</location>
    </subcellularLocation>
</comment>
<comment type="similarity">
    <text evidence="3">Belongs to the universal ribosomal protein uS4 family.</text>
</comment>